<protein>
    <recommendedName>
        <fullName evidence="1">3-hydroxyacyl-[acyl-carrier-protein] dehydratase FabZ</fullName>
        <ecNumber evidence="1">4.2.1.59</ecNumber>
    </recommendedName>
    <alternativeName>
        <fullName evidence="1">(3R)-hydroxymyristoyl-[acyl-carrier-protein] dehydratase</fullName>
        <shortName evidence="1">(3R)-hydroxymyristoyl-ACP dehydrase</shortName>
    </alternativeName>
    <alternativeName>
        <fullName evidence="1">Beta-hydroxyacyl-ACP dehydratase</fullName>
    </alternativeName>
</protein>
<name>FABZ_CLOBL</name>
<accession>A7GJJ2</accession>
<organism>
    <name type="scientific">Clostridium botulinum (strain Langeland / NCTC 10281 / Type F)</name>
    <dbReference type="NCBI Taxonomy" id="441772"/>
    <lineage>
        <taxon>Bacteria</taxon>
        <taxon>Bacillati</taxon>
        <taxon>Bacillota</taxon>
        <taxon>Clostridia</taxon>
        <taxon>Eubacteriales</taxon>
        <taxon>Clostridiaceae</taxon>
        <taxon>Clostridium</taxon>
    </lineage>
</organism>
<feature type="chain" id="PRO_0000340768" description="3-hydroxyacyl-[acyl-carrier-protein] dehydratase FabZ">
    <location>
        <begin position="1"/>
        <end position="144"/>
    </location>
</feature>
<feature type="active site" evidence="1">
    <location>
        <position position="51"/>
    </location>
</feature>
<gene>
    <name evidence="1" type="primary">fabZ</name>
    <name type="ordered locus">CLI_3822</name>
</gene>
<keyword id="KW-0963">Cytoplasm</keyword>
<keyword id="KW-0441">Lipid A biosynthesis</keyword>
<keyword id="KW-0444">Lipid biosynthesis</keyword>
<keyword id="KW-0443">Lipid metabolism</keyword>
<keyword id="KW-0456">Lyase</keyword>
<comment type="function">
    <text evidence="1">Involved in unsaturated fatty acids biosynthesis. Catalyzes the dehydration of short chain beta-hydroxyacyl-ACPs and long chain saturated and unsaturated beta-hydroxyacyl-ACPs.</text>
</comment>
<comment type="catalytic activity">
    <reaction evidence="1">
        <text>a (3R)-hydroxyacyl-[ACP] = a (2E)-enoyl-[ACP] + H2O</text>
        <dbReference type="Rhea" id="RHEA:13097"/>
        <dbReference type="Rhea" id="RHEA-COMP:9925"/>
        <dbReference type="Rhea" id="RHEA-COMP:9945"/>
        <dbReference type="ChEBI" id="CHEBI:15377"/>
        <dbReference type="ChEBI" id="CHEBI:78784"/>
        <dbReference type="ChEBI" id="CHEBI:78827"/>
        <dbReference type="EC" id="4.2.1.59"/>
    </reaction>
</comment>
<comment type="subcellular location">
    <subcellularLocation>
        <location evidence="1">Cytoplasm</location>
    </subcellularLocation>
</comment>
<comment type="similarity">
    <text evidence="1">Belongs to the thioester dehydratase family. FabZ subfamily.</text>
</comment>
<evidence type="ECO:0000255" key="1">
    <source>
        <dbReference type="HAMAP-Rule" id="MF_00406"/>
    </source>
</evidence>
<sequence length="144" mass="15676">MEKFLDINEIKKIIPHRYPFLLVDKITELEEGKSAVGYKNVTANEYFFNGHFPEEPVMPGVLIIEALAQVGAVAILSKEEFKGKIAYFGGINKAKFRKKVVPGDVLKLSIDLTKIKGVAGVGKAVATVDGKVAAEAELLFVVGK</sequence>
<reference key="1">
    <citation type="submission" date="2007-06" db="EMBL/GenBank/DDBJ databases">
        <authorList>
            <person name="Brinkac L.M."/>
            <person name="Daugherty S."/>
            <person name="Dodson R.J."/>
            <person name="Madupu R."/>
            <person name="Brown J.L."/>
            <person name="Bruce D."/>
            <person name="Detter C."/>
            <person name="Munk C."/>
            <person name="Smith L.A."/>
            <person name="Smith T.J."/>
            <person name="White O."/>
            <person name="Brettin T.S."/>
        </authorList>
    </citation>
    <scope>NUCLEOTIDE SEQUENCE [LARGE SCALE GENOMIC DNA]</scope>
    <source>
        <strain>Langeland / NCTC 10281 / Type F</strain>
    </source>
</reference>
<dbReference type="EC" id="4.2.1.59" evidence="1"/>
<dbReference type="EMBL" id="CP000728">
    <property type="protein sequence ID" value="ABS41427.1"/>
    <property type="molecule type" value="Genomic_DNA"/>
</dbReference>
<dbReference type="RefSeq" id="WP_012101206.1">
    <property type="nucleotide sequence ID" value="NC_009699.1"/>
</dbReference>
<dbReference type="SMR" id="A7GJJ2"/>
<dbReference type="KEGG" id="cbf:CLI_3822"/>
<dbReference type="HOGENOM" id="CLU_078912_3_0_9"/>
<dbReference type="Proteomes" id="UP000002410">
    <property type="component" value="Chromosome"/>
</dbReference>
<dbReference type="GO" id="GO:0005737">
    <property type="term" value="C:cytoplasm"/>
    <property type="evidence" value="ECO:0007669"/>
    <property type="project" value="UniProtKB-SubCell"/>
</dbReference>
<dbReference type="GO" id="GO:0016020">
    <property type="term" value="C:membrane"/>
    <property type="evidence" value="ECO:0007669"/>
    <property type="project" value="GOC"/>
</dbReference>
<dbReference type="GO" id="GO:0019171">
    <property type="term" value="F:(3R)-hydroxyacyl-[acyl-carrier-protein] dehydratase activity"/>
    <property type="evidence" value="ECO:0007669"/>
    <property type="project" value="UniProtKB-EC"/>
</dbReference>
<dbReference type="GO" id="GO:0006633">
    <property type="term" value="P:fatty acid biosynthetic process"/>
    <property type="evidence" value="ECO:0007669"/>
    <property type="project" value="UniProtKB-UniRule"/>
</dbReference>
<dbReference type="GO" id="GO:0009245">
    <property type="term" value="P:lipid A biosynthetic process"/>
    <property type="evidence" value="ECO:0007669"/>
    <property type="project" value="UniProtKB-UniRule"/>
</dbReference>
<dbReference type="CDD" id="cd01288">
    <property type="entry name" value="FabZ"/>
    <property type="match status" value="1"/>
</dbReference>
<dbReference type="FunFam" id="3.10.129.10:FF:000001">
    <property type="entry name" value="3-hydroxyacyl-[acyl-carrier-protein] dehydratase FabZ"/>
    <property type="match status" value="1"/>
</dbReference>
<dbReference type="Gene3D" id="3.10.129.10">
    <property type="entry name" value="Hotdog Thioesterase"/>
    <property type="match status" value="1"/>
</dbReference>
<dbReference type="HAMAP" id="MF_00406">
    <property type="entry name" value="FabZ"/>
    <property type="match status" value="1"/>
</dbReference>
<dbReference type="InterPro" id="IPR013114">
    <property type="entry name" value="FabA_FabZ"/>
</dbReference>
<dbReference type="InterPro" id="IPR010084">
    <property type="entry name" value="FabZ"/>
</dbReference>
<dbReference type="InterPro" id="IPR029069">
    <property type="entry name" value="HotDog_dom_sf"/>
</dbReference>
<dbReference type="NCBIfam" id="TIGR01750">
    <property type="entry name" value="fabZ"/>
    <property type="match status" value="1"/>
</dbReference>
<dbReference type="NCBIfam" id="NF000582">
    <property type="entry name" value="PRK00006.1"/>
    <property type="match status" value="1"/>
</dbReference>
<dbReference type="PANTHER" id="PTHR30272">
    <property type="entry name" value="3-HYDROXYACYL-[ACYL-CARRIER-PROTEIN] DEHYDRATASE"/>
    <property type="match status" value="1"/>
</dbReference>
<dbReference type="PANTHER" id="PTHR30272:SF1">
    <property type="entry name" value="3-HYDROXYACYL-[ACYL-CARRIER-PROTEIN] DEHYDRATASE"/>
    <property type="match status" value="1"/>
</dbReference>
<dbReference type="Pfam" id="PF07977">
    <property type="entry name" value="FabA"/>
    <property type="match status" value="1"/>
</dbReference>
<dbReference type="SUPFAM" id="SSF54637">
    <property type="entry name" value="Thioesterase/thiol ester dehydrase-isomerase"/>
    <property type="match status" value="1"/>
</dbReference>
<proteinExistence type="inferred from homology"/>